<accession>Q05349</accession>
<protein>
    <recommendedName>
        <fullName>Auxin-repressed 12.5 kDa protein</fullName>
    </recommendedName>
</protein>
<reference key="1">
    <citation type="journal article" date="1990" name="Plant Mol. Biol.">
        <title>Molecular cloning and sequencing of a cDNA for an auxin-repressed mRNA: correlation between fruit growth and repression of the auxin-regulated gene.</title>
        <authorList>
            <person name="Reddy A.S.N."/>
            <person name="Poovaiah B.W."/>
        </authorList>
    </citation>
    <scope>NUCLEOTIDE SEQUENCE [MRNA]</scope>
    <source>
        <strain>cv. Ozark Beauty</strain>
        <tissue>Flower</tissue>
    </source>
</reference>
<sequence>MVLLDKLWDDIVAGPQPERGLGMLRKVPQPLNLKDEGESSKITMPTTPTTPVTPTTPISARKDNVWRSVFHPGSNLSSKTMGNQVFDSPQPNSPTVYDWMYSGETRSKHHR</sequence>
<comment type="induction">
    <text>Repressed by exogenous auxin.</text>
</comment>
<comment type="similarity">
    <text evidence="2">Belongs to the DRM1/ARP family.</text>
</comment>
<name>12KD_FRAAN</name>
<evidence type="ECO:0000256" key="1">
    <source>
        <dbReference type="SAM" id="MobiDB-lite"/>
    </source>
</evidence>
<evidence type="ECO:0000305" key="2"/>
<proteinExistence type="evidence at transcript level"/>
<keyword id="KW-0927">Auxin signaling pathway</keyword>
<dbReference type="EMBL" id="X52429">
    <property type="protein sequence ID" value="CAA36676.1"/>
    <property type="molecule type" value="mRNA"/>
</dbReference>
<dbReference type="EMBL" id="L44142">
    <property type="protein sequence ID" value="AAA73872.1"/>
    <property type="molecule type" value="mRNA"/>
</dbReference>
<dbReference type="PIR" id="S11850">
    <property type="entry name" value="S11850"/>
</dbReference>
<dbReference type="GO" id="GO:0009734">
    <property type="term" value="P:auxin-activated signaling pathway"/>
    <property type="evidence" value="ECO:0007669"/>
    <property type="project" value="UniProtKB-KW"/>
</dbReference>
<dbReference type="InterPro" id="IPR008406">
    <property type="entry name" value="DRM/ARP"/>
</dbReference>
<dbReference type="PANTHER" id="PTHR33565">
    <property type="entry name" value="DORMANCY-ASSOCIATED PROTEIN 1"/>
    <property type="match status" value="1"/>
</dbReference>
<dbReference type="PANTHER" id="PTHR33565:SF2">
    <property type="entry name" value="DORMANCY-ASSOCIATED PROTEIN 1"/>
    <property type="match status" value="1"/>
</dbReference>
<dbReference type="Pfam" id="PF05564">
    <property type="entry name" value="Auxin_repressed"/>
    <property type="match status" value="1"/>
</dbReference>
<feature type="chain" id="PRO_0000064348" description="Auxin-repressed 12.5 kDa protein">
    <location>
        <begin position="1"/>
        <end position="111"/>
    </location>
</feature>
<feature type="region of interest" description="Disordered" evidence="1">
    <location>
        <begin position="18"/>
        <end position="111"/>
    </location>
</feature>
<feature type="compositionally biased region" description="Low complexity" evidence="1">
    <location>
        <begin position="43"/>
        <end position="57"/>
    </location>
</feature>
<feature type="compositionally biased region" description="Polar residues" evidence="1">
    <location>
        <begin position="74"/>
        <end position="95"/>
    </location>
</feature>
<organism>
    <name type="scientific">Fragaria ananassa</name>
    <name type="common">Strawberry</name>
    <name type="synonym">Fragaria chiloensis x Fragaria virginiana</name>
    <dbReference type="NCBI Taxonomy" id="3747"/>
    <lineage>
        <taxon>Eukaryota</taxon>
        <taxon>Viridiplantae</taxon>
        <taxon>Streptophyta</taxon>
        <taxon>Embryophyta</taxon>
        <taxon>Tracheophyta</taxon>
        <taxon>Spermatophyta</taxon>
        <taxon>Magnoliopsida</taxon>
        <taxon>eudicotyledons</taxon>
        <taxon>Gunneridae</taxon>
        <taxon>Pentapetalae</taxon>
        <taxon>rosids</taxon>
        <taxon>fabids</taxon>
        <taxon>Rosales</taxon>
        <taxon>Rosaceae</taxon>
        <taxon>Rosoideae</taxon>
        <taxon>Potentilleae</taxon>
        <taxon>Fragariinae</taxon>
        <taxon>Fragaria</taxon>
    </lineage>
</organism>